<proteinExistence type="evidence at protein level"/>
<feature type="chain" id="PRO_0000059897" description="Ig heavy chain V region AC38 15.3">
    <location>
        <begin position="1"/>
        <end position="120" status="greater than"/>
    </location>
</feature>
<feature type="region of interest" description="V segment">
    <location>
        <begin position="1"/>
        <end position="98"/>
    </location>
</feature>
<feature type="region of interest" description="D segment">
    <location>
        <begin position="99"/>
        <end position="105"/>
    </location>
</feature>
<feature type="region of interest" description="J segment">
    <location>
        <begin position="106"/>
        <end position="120"/>
    </location>
</feature>
<feature type="disulfide bond" evidence="1">
    <location>
        <begin position="22"/>
        <end position="96"/>
    </location>
</feature>
<feature type="non-terminal residue">
    <location>
        <position position="120"/>
    </location>
</feature>
<name>HVM50_MOUSE</name>
<protein>
    <recommendedName>
        <fullName>Ig heavy chain V region AC38 15.3</fullName>
    </recommendedName>
</protein>
<organism>
    <name type="scientific">Mus musculus</name>
    <name type="common">Mouse</name>
    <dbReference type="NCBI Taxonomy" id="10090"/>
    <lineage>
        <taxon>Eukaryota</taxon>
        <taxon>Metazoa</taxon>
        <taxon>Chordata</taxon>
        <taxon>Craniata</taxon>
        <taxon>Vertebrata</taxon>
        <taxon>Euteleostomi</taxon>
        <taxon>Mammalia</taxon>
        <taxon>Eutheria</taxon>
        <taxon>Euarchontoglires</taxon>
        <taxon>Glires</taxon>
        <taxon>Rodentia</taxon>
        <taxon>Myomorpha</taxon>
        <taxon>Muroidea</taxon>
        <taxon>Muridae</taxon>
        <taxon>Murinae</taxon>
        <taxon>Mus</taxon>
        <taxon>Mus</taxon>
    </lineage>
</organism>
<dbReference type="PIR" id="A02037">
    <property type="entry name" value="MHMS15"/>
</dbReference>
<dbReference type="SMR" id="P06329"/>
<dbReference type="FunCoup" id="P06329">
    <property type="interactions" value="189"/>
</dbReference>
<dbReference type="InParanoid" id="P06329"/>
<dbReference type="Proteomes" id="UP000000589">
    <property type="component" value="Unplaced"/>
</dbReference>
<dbReference type="RNAct" id="P06329">
    <property type="molecule type" value="protein"/>
</dbReference>
<dbReference type="GO" id="GO:0005576">
    <property type="term" value="C:extracellular region"/>
    <property type="evidence" value="ECO:0007669"/>
    <property type="project" value="UniProtKB-ARBA"/>
</dbReference>
<dbReference type="GO" id="GO:0019814">
    <property type="term" value="C:immunoglobulin complex"/>
    <property type="evidence" value="ECO:0007669"/>
    <property type="project" value="UniProtKB-KW"/>
</dbReference>
<dbReference type="GO" id="GO:0003823">
    <property type="term" value="F:antigen binding"/>
    <property type="evidence" value="ECO:0000318"/>
    <property type="project" value="GO_Central"/>
</dbReference>
<dbReference type="GO" id="GO:0016064">
    <property type="term" value="P:immunoglobulin mediated immune response"/>
    <property type="evidence" value="ECO:0000318"/>
    <property type="project" value="GO_Central"/>
</dbReference>
<dbReference type="CDD" id="cd04981">
    <property type="entry name" value="IgV_H"/>
    <property type="match status" value="1"/>
</dbReference>
<dbReference type="FunFam" id="2.60.40.10:FF:001025">
    <property type="entry name" value="Immunoglobulin heavy variable V1-74"/>
    <property type="match status" value="1"/>
</dbReference>
<dbReference type="Gene3D" id="2.60.40.10">
    <property type="entry name" value="Immunoglobulins"/>
    <property type="match status" value="1"/>
</dbReference>
<dbReference type="InterPro" id="IPR007110">
    <property type="entry name" value="Ig-like_dom"/>
</dbReference>
<dbReference type="InterPro" id="IPR036179">
    <property type="entry name" value="Ig-like_dom_sf"/>
</dbReference>
<dbReference type="InterPro" id="IPR013783">
    <property type="entry name" value="Ig-like_fold"/>
</dbReference>
<dbReference type="InterPro" id="IPR003599">
    <property type="entry name" value="Ig_sub"/>
</dbReference>
<dbReference type="InterPro" id="IPR013106">
    <property type="entry name" value="Ig_V-set"/>
</dbReference>
<dbReference type="InterPro" id="IPR050199">
    <property type="entry name" value="IgHV"/>
</dbReference>
<dbReference type="PANTHER" id="PTHR23266">
    <property type="entry name" value="IMMUNOGLOBULIN HEAVY CHAIN"/>
    <property type="match status" value="1"/>
</dbReference>
<dbReference type="Pfam" id="PF07686">
    <property type="entry name" value="V-set"/>
    <property type="match status" value="1"/>
</dbReference>
<dbReference type="SMART" id="SM00409">
    <property type="entry name" value="IG"/>
    <property type="match status" value="1"/>
</dbReference>
<dbReference type="SMART" id="SM00406">
    <property type="entry name" value="IGv"/>
    <property type="match status" value="1"/>
</dbReference>
<dbReference type="SUPFAM" id="SSF48726">
    <property type="entry name" value="Immunoglobulin"/>
    <property type="match status" value="1"/>
</dbReference>
<dbReference type="PROSITE" id="PS50835">
    <property type="entry name" value="IG_LIKE"/>
    <property type="match status" value="1"/>
</dbReference>
<reference key="1">
    <citation type="journal article" date="1984" name="EMBO J.">
        <title>A V region determinant (idiotope) expressed at high frequency in B lymphocytes is encoded by a large set of antibody structural genes.</title>
        <authorList>
            <person name="Dildrop R."/>
            <person name="Bovens J."/>
            <person name="Siekevitz M."/>
            <person name="Beyreuther K."/>
            <person name="Rajewsky K."/>
        </authorList>
    </citation>
    <scope>PROTEIN SEQUENCE</scope>
</reference>
<accession>P06329</accession>
<evidence type="ECO:0000255" key="1">
    <source>
        <dbReference type="PROSITE-ProRule" id="PRU00114"/>
    </source>
</evidence>
<sequence>QVQLLQPGTELVKPGASVNLSCKASGYTFTSYWMHWIRQRPGQGLEWIGGINPSNGGTNYNEKFKSKATLTVDKSSSATYMQLSTPTSEDSAVYYCARWDYEGDRYFDVWGTGTTVTVSS</sequence>
<keyword id="KW-1064">Adaptive immunity</keyword>
<keyword id="KW-0903">Direct protein sequencing</keyword>
<keyword id="KW-1015">Disulfide bond</keyword>
<keyword id="KW-0391">Immunity</keyword>
<keyword id="KW-1280">Immunoglobulin</keyword>
<keyword id="KW-1185">Reference proteome</keyword>